<name>MATK_AMOPO</name>
<proteinExistence type="inferred from homology"/>
<reference key="1">
    <citation type="journal article" date="2002" name="Syst. Bot.">
        <title>Phylogeny of the tribe Thomsonieae (Araceae) based on chloroplast matK and trnL intron sequences.</title>
        <authorList>
            <person name="Grob G.B.J."/>
            <person name="Gravendeel B."/>
            <person name="Eurlings M.C.M."/>
            <person name="Hetterscheid W.L.A."/>
        </authorList>
        <dbReference type="AGRICOLA" id="IND23294517"/>
    </citation>
    <scope>NUCLEOTIDE SEQUENCE [GENOMIC DNA]</scope>
</reference>
<gene>
    <name evidence="1" type="primary">matK</name>
</gene>
<feature type="chain" id="PRO_0000143230" description="Maturase K">
    <location>
        <begin position="1"/>
        <end position="512"/>
    </location>
</feature>
<geneLocation type="chloroplast"/>
<organism>
    <name type="scientific">Amorphophallus paeoniifolius</name>
    <name type="common">Whitespot giant arum</name>
    <name type="synonym">Amorphophallus campanulatus</name>
    <dbReference type="NCBI Taxonomy" id="174187"/>
    <lineage>
        <taxon>Eukaryota</taxon>
        <taxon>Viridiplantae</taxon>
        <taxon>Streptophyta</taxon>
        <taxon>Embryophyta</taxon>
        <taxon>Tracheophyta</taxon>
        <taxon>Spermatophyta</taxon>
        <taxon>Magnoliopsida</taxon>
        <taxon>Liliopsida</taxon>
        <taxon>Araceae</taxon>
        <taxon>Aroideae</taxon>
        <taxon>Thomsonieae</taxon>
        <taxon>Amorphophallus</taxon>
    </lineage>
</organism>
<dbReference type="EMBL" id="AF387410">
    <property type="protein sequence ID" value="AAM46585.1"/>
    <property type="molecule type" value="Genomic_DNA"/>
</dbReference>
<dbReference type="GO" id="GO:0009507">
    <property type="term" value="C:chloroplast"/>
    <property type="evidence" value="ECO:0007669"/>
    <property type="project" value="UniProtKB-SubCell"/>
</dbReference>
<dbReference type="GO" id="GO:0003723">
    <property type="term" value="F:RNA binding"/>
    <property type="evidence" value="ECO:0007669"/>
    <property type="project" value="UniProtKB-KW"/>
</dbReference>
<dbReference type="GO" id="GO:0006397">
    <property type="term" value="P:mRNA processing"/>
    <property type="evidence" value="ECO:0007669"/>
    <property type="project" value="UniProtKB-KW"/>
</dbReference>
<dbReference type="GO" id="GO:0008380">
    <property type="term" value="P:RNA splicing"/>
    <property type="evidence" value="ECO:0007669"/>
    <property type="project" value="UniProtKB-UniRule"/>
</dbReference>
<dbReference type="GO" id="GO:0008033">
    <property type="term" value="P:tRNA processing"/>
    <property type="evidence" value="ECO:0007669"/>
    <property type="project" value="UniProtKB-KW"/>
</dbReference>
<dbReference type="HAMAP" id="MF_01390">
    <property type="entry name" value="MatK"/>
    <property type="match status" value="1"/>
</dbReference>
<dbReference type="InterPro" id="IPR024937">
    <property type="entry name" value="Domain_X"/>
</dbReference>
<dbReference type="InterPro" id="IPR002866">
    <property type="entry name" value="Maturase_MatK"/>
</dbReference>
<dbReference type="InterPro" id="IPR024942">
    <property type="entry name" value="Maturase_MatK_N"/>
</dbReference>
<dbReference type="PANTHER" id="PTHR34811">
    <property type="entry name" value="MATURASE K"/>
    <property type="match status" value="1"/>
</dbReference>
<dbReference type="PANTHER" id="PTHR34811:SF1">
    <property type="entry name" value="MATURASE K"/>
    <property type="match status" value="1"/>
</dbReference>
<dbReference type="Pfam" id="PF01348">
    <property type="entry name" value="Intron_maturas2"/>
    <property type="match status" value="1"/>
</dbReference>
<dbReference type="Pfam" id="PF01824">
    <property type="entry name" value="MatK_N"/>
    <property type="match status" value="1"/>
</dbReference>
<keyword id="KW-0150">Chloroplast</keyword>
<keyword id="KW-0507">mRNA processing</keyword>
<keyword id="KW-0934">Plastid</keyword>
<keyword id="KW-0694">RNA-binding</keyword>
<keyword id="KW-0819">tRNA processing</keyword>
<comment type="function">
    <text evidence="1">Usually encoded in the trnK tRNA gene intron. Probably assists in splicing its own and other chloroplast group II introns.</text>
</comment>
<comment type="subcellular location">
    <subcellularLocation>
        <location>Plastid</location>
        <location>Chloroplast</location>
    </subcellularLocation>
</comment>
<comment type="similarity">
    <text evidence="1">Belongs to the intron maturase 2 family. MatK subfamily.</text>
</comment>
<protein>
    <recommendedName>
        <fullName evidence="1">Maturase K</fullName>
    </recommendedName>
    <alternativeName>
        <fullName evidence="1">Intron maturase</fullName>
    </alternativeName>
</protein>
<evidence type="ECO:0000255" key="1">
    <source>
        <dbReference type="HAMAP-Rule" id="MF_01390"/>
    </source>
</evidence>
<sequence length="512" mass="60674">MEELKGYLKKSRSKQQHFLYPLLFQEYIYAFAHDHGLNVNGSFFYEPAEISGYDKKFSSLLVKRLITRMYQQNYLINSVNDSNQNRFVGHNKNLYSQMISEVFAVIVEIPFSLRLVSFLAEKKEIPKSQNLRTIHSIFPFFEDKLSHLNCVSDILIPYPVHLEILVQILQCRIQDVPSLHLLRFFFHEYHNWNNLITPKKSNYYGFSKENPRLFLFLYNSYVVECESIFVFLRKQSSYLRSTSSGTFLERAHFYEKIEQHLVVLCCNDFQKTLWLFKDPFMHYVRYQGKSILASKGTHLLMKKWKSYFVNFWQCHFHFWSQPCRIHINQFSKFSFYFLGYLSSVPINPSAVKSQMLENSFLVDTVTKKFETIVPIIPMIGALSKAKFCNVSGNPISKPVWADLSDSDIIDRFGRTCRNLSHYYSGSSKKQSLYRIKYILRLSCARTLARKHKSTVRAFLQRLGSEFLEEFFTEEEKALSLILPRISYPLDKLYRERIWYLDIIRINDLVNHL</sequence>
<accession>Q8MEE6</accession>